<feature type="chain" id="PRO_0000216138" description="UPF0336 protein ML1910">
    <location>
        <begin position="1"/>
        <end position="159"/>
    </location>
</feature>
<comment type="similarity">
    <text evidence="1">Belongs to the UPF0336 family.</text>
</comment>
<accession>Q9CBJ6</accession>
<organism>
    <name type="scientific">Mycobacterium leprae (strain TN)</name>
    <dbReference type="NCBI Taxonomy" id="272631"/>
    <lineage>
        <taxon>Bacteria</taxon>
        <taxon>Bacillati</taxon>
        <taxon>Actinomycetota</taxon>
        <taxon>Actinomycetes</taxon>
        <taxon>Mycobacteriales</taxon>
        <taxon>Mycobacteriaceae</taxon>
        <taxon>Mycobacterium</taxon>
    </lineage>
</organism>
<keyword id="KW-1185">Reference proteome</keyword>
<proteinExistence type="inferred from homology"/>
<gene>
    <name type="ordered locus">ML1910</name>
</gene>
<sequence length="159" mass="17641">MGLTTNIVGMHYRYPDHYEVEREKIREYAVAVQNEDTSYFEEDAAAELGYKGLLAPLTFICLFGYKAQSAFFKHANIAVTDQQIVQIDQVLKFVKPIVAGDKLYCDVYVDSMREAHGTQIIVTKNVVTNEVGDIVQETYTTLAGRVGEGGEEGFSDGAA</sequence>
<reference key="1">
    <citation type="journal article" date="2001" name="Nature">
        <title>Massive gene decay in the leprosy bacillus.</title>
        <authorList>
            <person name="Cole S.T."/>
            <person name="Eiglmeier K."/>
            <person name="Parkhill J."/>
            <person name="James K.D."/>
            <person name="Thomson N.R."/>
            <person name="Wheeler P.R."/>
            <person name="Honore N."/>
            <person name="Garnier T."/>
            <person name="Churcher C.M."/>
            <person name="Harris D.E."/>
            <person name="Mungall K.L."/>
            <person name="Basham D."/>
            <person name="Brown D."/>
            <person name="Chillingworth T."/>
            <person name="Connor R."/>
            <person name="Davies R.M."/>
            <person name="Devlin K."/>
            <person name="Duthoy S."/>
            <person name="Feltwell T."/>
            <person name="Fraser A."/>
            <person name="Hamlin N."/>
            <person name="Holroyd S."/>
            <person name="Hornsby T."/>
            <person name="Jagels K."/>
            <person name="Lacroix C."/>
            <person name="Maclean J."/>
            <person name="Moule S."/>
            <person name="Murphy L.D."/>
            <person name="Oliver K."/>
            <person name="Quail M.A."/>
            <person name="Rajandream M.A."/>
            <person name="Rutherford K.M."/>
            <person name="Rutter S."/>
            <person name="Seeger K."/>
            <person name="Simon S."/>
            <person name="Simmonds M."/>
            <person name="Skelton J."/>
            <person name="Squares R."/>
            <person name="Squares S."/>
            <person name="Stevens K."/>
            <person name="Taylor K."/>
            <person name="Whitehead S."/>
            <person name="Woodward J.R."/>
            <person name="Barrell B.G."/>
        </authorList>
    </citation>
    <scope>NUCLEOTIDE SEQUENCE [LARGE SCALE GENOMIC DNA]</scope>
    <source>
        <strain>TN</strain>
    </source>
</reference>
<dbReference type="EMBL" id="AL583923">
    <property type="protein sequence ID" value="CAC30864.1"/>
    <property type="molecule type" value="Genomic_DNA"/>
</dbReference>
<dbReference type="PIR" id="H87147">
    <property type="entry name" value="H87147"/>
</dbReference>
<dbReference type="RefSeq" id="NP_302287.1">
    <property type="nucleotide sequence ID" value="NC_002677.1"/>
</dbReference>
<dbReference type="SMR" id="Q9CBJ6"/>
<dbReference type="STRING" id="272631.gene:17575759"/>
<dbReference type="KEGG" id="mle:ML1910"/>
<dbReference type="PATRIC" id="fig|272631.5.peg.3618"/>
<dbReference type="Leproma" id="ML1910"/>
<dbReference type="eggNOG" id="COG2030">
    <property type="taxonomic scope" value="Bacteria"/>
</dbReference>
<dbReference type="HOGENOM" id="CLU_116276_0_1_11"/>
<dbReference type="OrthoDB" id="5415111at2"/>
<dbReference type="Proteomes" id="UP000000806">
    <property type="component" value="Chromosome"/>
</dbReference>
<dbReference type="CDD" id="cd03441">
    <property type="entry name" value="R_hydratase_like"/>
    <property type="match status" value="1"/>
</dbReference>
<dbReference type="Gene3D" id="3.10.129.10">
    <property type="entry name" value="Hotdog Thioesterase"/>
    <property type="match status" value="1"/>
</dbReference>
<dbReference type="HAMAP" id="MF_00799">
    <property type="entry name" value="UPF0336"/>
    <property type="match status" value="1"/>
</dbReference>
<dbReference type="InterPro" id="IPR039569">
    <property type="entry name" value="FAS1-like_DH_region"/>
</dbReference>
<dbReference type="InterPro" id="IPR016709">
    <property type="entry name" value="HadA-like"/>
</dbReference>
<dbReference type="InterPro" id="IPR029069">
    <property type="entry name" value="HotDog_dom_sf"/>
</dbReference>
<dbReference type="InterPro" id="IPR054849">
    <property type="entry name" value="UPF0336_fam"/>
</dbReference>
<dbReference type="NCBIfam" id="NF040624">
    <property type="entry name" value="HadA"/>
    <property type="match status" value="1"/>
</dbReference>
<dbReference type="NCBIfam" id="NF010245">
    <property type="entry name" value="PRK13692.1"/>
    <property type="match status" value="1"/>
</dbReference>
<dbReference type="Pfam" id="PF13452">
    <property type="entry name" value="FAS1_DH_region"/>
    <property type="match status" value="1"/>
</dbReference>
<dbReference type="PIRSF" id="PIRSF018072">
    <property type="entry name" value="UCP018072"/>
    <property type="match status" value="1"/>
</dbReference>
<dbReference type="SUPFAM" id="SSF54637">
    <property type="entry name" value="Thioesterase/thiol ester dehydrase-isomerase"/>
    <property type="match status" value="1"/>
</dbReference>
<protein>
    <recommendedName>
        <fullName evidence="1">UPF0336 protein ML1910</fullName>
    </recommendedName>
</protein>
<name>Y1910_MYCLE</name>
<evidence type="ECO:0000255" key="1">
    <source>
        <dbReference type="HAMAP-Rule" id="MF_00799"/>
    </source>
</evidence>